<sequence>MGDKKSPTRPKRQPKPASDEGYWDCSVCTFRNSAEAFKCMMCDVRKGTSTRKPRPVSQLVAQQVTQQFVPPTQSKKEKKDRVEKDKSEKEAASKKNCHKKTRPRLKNVDRSSAQHLEVTVGDLTVIITDFKEKAKSAPASSAAGDQHSQGSCSSDSTERGVSRSSSPRGEASSLNGESH</sequence>
<organism evidence="7">
    <name type="scientific">Mus musculus</name>
    <name type="common">Mouse</name>
    <dbReference type="NCBI Taxonomy" id="10090"/>
    <lineage>
        <taxon>Eukaryota</taxon>
        <taxon>Metazoa</taxon>
        <taxon>Chordata</taxon>
        <taxon>Craniata</taxon>
        <taxon>Vertebrata</taxon>
        <taxon>Euteleostomi</taxon>
        <taxon>Mammalia</taxon>
        <taxon>Eutheria</taxon>
        <taxon>Euarchontoglires</taxon>
        <taxon>Glires</taxon>
        <taxon>Rodentia</taxon>
        <taxon>Myomorpha</taxon>
        <taxon>Muroidea</taxon>
        <taxon>Muridae</taxon>
        <taxon>Murinae</taxon>
        <taxon>Mus</taxon>
        <taxon>Mus</taxon>
    </lineage>
</organism>
<accession>Q99LW6</accession>
<accession>Q3UFD4</accession>
<accession>Q9DBE4</accession>
<keyword id="KW-0025">Alternative splicing</keyword>
<keyword id="KW-0479">Metal-binding</keyword>
<keyword id="KW-0539">Nucleus</keyword>
<keyword id="KW-0597">Phosphoprotein</keyword>
<keyword id="KW-1185">Reference proteome</keyword>
<keyword id="KW-0804">Transcription</keyword>
<keyword id="KW-0805">Transcription regulation</keyword>
<keyword id="KW-0862">Zinc</keyword>
<keyword id="KW-0863">Zinc-finger</keyword>
<evidence type="ECO:0000255" key="1">
    <source>
        <dbReference type="PROSITE-ProRule" id="PRU00322"/>
    </source>
</evidence>
<evidence type="ECO:0000256" key="2">
    <source>
        <dbReference type="SAM" id="MobiDB-lite"/>
    </source>
</evidence>
<evidence type="ECO:0000269" key="3">
    <source>
    </source>
</evidence>
<evidence type="ECO:0000269" key="4">
    <source>
    </source>
</evidence>
<evidence type="ECO:0000303" key="5">
    <source>
    </source>
</evidence>
<evidence type="ECO:0000305" key="6"/>
<evidence type="ECO:0000312" key="7">
    <source>
        <dbReference type="EMBL" id="AAH02192.1"/>
    </source>
</evidence>
<evidence type="ECO:0000312" key="8">
    <source>
        <dbReference type="EMBL" id="BAC97817.1"/>
    </source>
</evidence>
<evidence type="ECO:0007744" key="9">
    <source>
    </source>
</evidence>
<protein>
    <recommendedName>
        <fullName>YY1-associated factor 2</fullName>
    </recommendedName>
</protein>
<dbReference type="EMBL" id="AB100452">
    <property type="protein sequence ID" value="BAC97817.1"/>
    <property type="molecule type" value="mRNA"/>
</dbReference>
<dbReference type="EMBL" id="AB100453">
    <property type="protein sequence ID" value="BAC97818.1"/>
    <property type="molecule type" value="mRNA"/>
</dbReference>
<dbReference type="EMBL" id="AK005008">
    <property type="protein sequence ID" value="BAB23741.1"/>
    <property type="molecule type" value="mRNA"/>
</dbReference>
<dbReference type="EMBL" id="AK148634">
    <property type="protein sequence ID" value="BAE28627.1"/>
    <property type="molecule type" value="mRNA"/>
</dbReference>
<dbReference type="EMBL" id="BC002192">
    <property type="protein sequence ID" value="AAH02192.1"/>
    <property type="molecule type" value="mRNA"/>
</dbReference>
<dbReference type="CCDS" id="CCDS27765.1">
    <molecule id="Q99LW6-1"/>
</dbReference>
<dbReference type="RefSeq" id="NP_077151.3">
    <molecule id="Q99LW6-1"/>
    <property type="nucleotide sequence ID" value="NM_024189.6"/>
</dbReference>
<dbReference type="SMR" id="Q99LW6"/>
<dbReference type="BioGRID" id="211908">
    <property type="interactions" value="3"/>
</dbReference>
<dbReference type="FunCoup" id="Q99LW6">
    <property type="interactions" value="4432"/>
</dbReference>
<dbReference type="IntAct" id="Q99LW6">
    <property type="interactions" value="3"/>
</dbReference>
<dbReference type="STRING" id="10090.ENSMUSP00000079179"/>
<dbReference type="iPTMnet" id="Q99LW6"/>
<dbReference type="PhosphoSitePlus" id="Q99LW6"/>
<dbReference type="PaxDb" id="10090-ENSMUSP00000079179"/>
<dbReference type="PeptideAtlas" id="Q99LW6"/>
<dbReference type="ProteomicsDB" id="299614">
    <molecule id="Q99LW6-1"/>
</dbReference>
<dbReference type="ProteomicsDB" id="299615">
    <molecule id="Q99LW6-2"/>
</dbReference>
<dbReference type="Pumba" id="Q99LW6"/>
<dbReference type="Antibodypedia" id="13166">
    <property type="antibodies" value="154 antibodies from 27 providers"/>
</dbReference>
<dbReference type="DNASU" id="67057"/>
<dbReference type="Ensembl" id="ENSMUST00000080299.7">
    <molecule id="Q99LW6-1"/>
    <property type="protein sequence ID" value="ENSMUSP00000079179.7"/>
    <property type="gene ID" value="ENSMUSG00000022634.10"/>
</dbReference>
<dbReference type="Ensembl" id="ENSMUST00000133736.2">
    <molecule id="Q99LW6-2"/>
    <property type="protein sequence ID" value="ENSMUSP00000155669.2"/>
    <property type="gene ID" value="ENSMUSG00000022634.10"/>
</dbReference>
<dbReference type="GeneID" id="67057"/>
<dbReference type="KEGG" id="mmu:67057"/>
<dbReference type="UCSC" id="uc007xis.2">
    <molecule id="Q99LW6-1"/>
    <property type="organism name" value="mouse"/>
</dbReference>
<dbReference type="AGR" id="MGI:1914307"/>
<dbReference type="CTD" id="10138"/>
<dbReference type="MGI" id="MGI:1914307">
    <property type="gene designation" value="Yaf2"/>
</dbReference>
<dbReference type="VEuPathDB" id="HostDB:ENSMUSG00000022634"/>
<dbReference type="eggNOG" id="KOG4477">
    <property type="taxonomic scope" value="Eukaryota"/>
</dbReference>
<dbReference type="GeneTree" id="ENSGT00390000013995"/>
<dbReference type="HOGENOM" id="CLU_095374_0_1_1"/>
<dbReference type="InParanoid" id="Q99LW6"/>
<dbReference type="OMA" id="QKRMRPR"/>
<dbReference type="OrthoDB" id="10063208at2759"/>
<dbReference type="PhylomeDB" id="Q99LW6"/>
<dbReference type="TreeFam" id="TF350501"/>
<dbReference type="Reactome" id="R-MMU-8939243">
    <property type="pathway name" value="RUNX1 interacts with co-factors whose precise effect on RUNX1 targets is not known"/>
</dbReference>
<dbReference type="Reactome" id="R-MMU-8953750">
    <property type="pathway name" value="Transcriptional Regulation by E2F6"/>
</dbReference>
<dbReference type="BioGRID-ORCS" id="67057">
    <property type="hits" value="1 hit in 80 CRISPR screens"/>
</dbReference>
<dbReference type="ChiTaRS" id="Yaf2">
    <property type="organism name" value="mouse"/>
</dbReference>
<dbReference type="PRO" id="PR:Q99LW6"/>
<dbReference type="Proteomes" id="UP000000589">
    <property type="component" value="Chromosome 15"/>
</dbReference>
<dbReference type="RNAct" id="Q99LW6">
    <property type="molecule type" value="protein"/>
</dbReference>
<dbReference type="Bgee" id="ENSMUSG00000022634">
    <property type="expression patterns" value="Expressed in CA1 field of hippocampus and 277 other cell types or tissues"/>
</dbReference>
<dbReference type="GO" id="GO:0005829">
    <property type="term" value="C:cytosol"/>
    <property type="evidence" value="ECO:0007669"/>
    <property type="project" value="Ensembl"/>
</dbReference>
<dbReference type="GO" id="GO:0005654">
    <property type="term" value="C:nucleoplasm"/>
    <property type="evidence" value="ECO:0007669"/>
    <property type="project" value="Ensembl"/>
</dbReference>
<dbReference type="GO" id="GO:0005634">
    <property type="term" value="C:nucleus"/>
    <property type="evidence" value="ECO:0000314"/>
    <property type="project" value="UniProtKB"/>
</dbReference>
<dbReference type="GO" id="GO:0003713">
    <property type="term" value="F:transcription coactivator activity"/>
    <property type="evidence" value="ECO:0000250"/>
    <property type="project" value="UniProtKB"/>
</dbReference>
<dbReference type="GO" id="GO:0003714">
    <property type="term" value="F:transcription corepressor activity"/>
    <property type="evidence" value="ECO:0000250"/>
    <property type="project" value="UniProtKB"/>
</dbReference>
<dbReference type="GO" id="GO:0008270">
    <property type="term" value="F:zinc ion binding"/>
    <property type="evidence" value="ECO:0007669"/>
    <property type="project" value="UniProtKB-KW"/>
</dbReference>
<dbReference type="GO" id="GO:0045892">
    <property type="term" value="P:negative regulation of DNA-templated transcription"/>
    <property type="evidence" value="ECO:0000250"/>
    <property type="project" value="UniProtKB"/>
</dbReference>
<dbReference type="GO" id="GO:0045893">
    <property type="term" value="P:positive regulation of DNA-templated transcription"/>
    <property type="evidence" value="ECO:0000250"/>
    <property type="project" value="UniProtKB"/>
</dbReference>
<dbReference type="FunFam" id="4.10.1060.10:FF:000009">
    <property type="entry name" value="YY1 associated factor 2"/>
    <property type="match status" value="1"/>
</dbReference>
<dbReference type="Gene3D" id="4.10.1060.10">
    <property type="entry name" value="Zinc finger, RanBP2-type"/>
    <property type="match status" value="1"/>
</dbReference>
<dbReference type="InterPro" id="IPR039958">
    <property type="entry name" value="RYBP/YAF2"/>
</dbReference>
<dbReference type="InterPro" id="IPR033774">
    <property type="entry name" value="YAF2_RYBP"/>
</dbReference>
<dbReference type="InterPro" id="IPR001876">
    <property type="entry name" value="Znf_RanBP2"/>
</dbReference>
<dbReference type="InterPro" id="IPR036443">
    <property type="entry name" value="Znf_RanBP2_sf"/>
</dbReference>
<dbReference type="PANTHER" id="PTHR12920">
    <property type="entry name" value="RYBP AND YAF2-RELATED"/>
    <property type="match status" value="1"/>
</dbReference>
<dbReference type="PANTHER" id="PTHR12920:SF2">
    <property type="entry name" value="YY1-ASSOCIATED FACTOR 2"/>
    <property type="match status" value="1"/>
</dbReference>
<dbReference type="Pfam" id="PF17219">
    <property type="entry name" value="YAF2_RYBP"/>
    <property type="match status" value="1"/>
</dbReference>
<dbReference type="Pfam" id="PF00641">
    <property type="entry name" value="Zn_ribbon_RanBP"/>
    <property type="match status" value="1"/>
</dbReference>
<dbReference type="SMART" id="SM00547">
    <property type="entry name" value="ZnF_RBZ"/>
    <property type="match status" value="1"/>
</dbReference>
<dbReference type="SUPFAM" id="SSF90209">
    <property type="entry name" value="Ran binding protein zinc finger-like"/>
    <property type="match status" value="1"/>
</dbReference>
<dbReference type="PROSITE" id="PS01358">
    <property type="entry name" value="ZF_RANBP2_1"/>
    <property type="match status" value="1"/>
</dbReference>
<dbReference type="PROSITE" id="PS50199">
    <property type="entry name" value="ZF_RANBP2_2"/>
    <property type="match status" value="1"/>
</dbReference>
<proteinExistence type="evidence at protein level"/>
<reference evidence="6" key="1">
    <citation type="journal article" date="2003" name="Gene">
        <title>The mouse YAF2 gene generates two distinct transcripts and is expressed in pre- and postimplantation embryos.</title>
        <authorList>
            <person name="Kaneko T."/>
            <person name="Miyagishima H."/>
            <person name="Hasegawa T."/>
            <person name="Mizutani-Koseki Y."/>
            <person name="Isono K."/>
            <person name="Koseki H."/>
        </authorList>
    </citation>
    <scope>NUCLEOTIDE SEQUENCE [MRNA] (ISOFORMS 1 AND 2)</scope>
    <scope>SUBCELLULAR LOCATION</scope>
    <scope>TISSUE SPECIFICITY</scope>
    <scope>DEVELOPMENTAL STAGE</scope>
    <scope>INTERACTION WITH RNF2</scope>
    <source>
        <tissue evidence="8">Brain</tissue>
    </source>
</reference>
<reference key="2">
    <citation type="journal article" date="2005" name="Science">
        <title>The transcriptional landscape of the mammalian genome.</title>
        <authorList>
            <person name="Carninci P."/>
            <person name="Kasukawa T."/>
            <person name="Katayama S."/>
            <person name="Gough J."/>
            <person name="Frith M.C."/>
            <person name="Maeda N."/>
            <person name="Oyama R."/>
            <person name="Ravasi T."/>
            <person name="Lenhard B."/>
            <person name="Wells C."/>
            <person name="Kodzius R."/>
            <person name="Shimokawa K."/>
            <person name="Bajic V.B."/>
            <person name="Brenner S.E."/>
            <person name="Batalov S."/>
            <person name="Forrest A.R."/>
            <person name="Zavolan M."/>
            <person name="Davis M.J."/>
            <person name="Wilming L.G."/>
            <person name="Aidinis V."/>
            <person name="Allen J.E."/>
            <person name="Ambesi-Impiombato A."/>
            <person name="Apweiler R."/>
            <person name="Aturaliya R.N."/>
            <person name="Bailey T.L."/>
            <person name="Bansal M."/>
            <person name="Baxter L."/>
            <person name="Beisel K.W."/>
            <person name="Bersano T."/>
            <person name="Bono H."/>
            <person name="Chalk A.M."/>
            <person name="Chiu K.P."/>
            <person name="Choudhary V."/>
            <person name="Christoffels A."/>
            <person name="Clutterbuck D.R."/>
            <person name="Crowe M.L."/>
            <person name="Dalla E."/>
            <person name="Dalrymple B.P."/>
            <person name="de Bono B."/>
            <person name="Della Gatta G."/>
            <person name="di Bernardo D."/>
            <person name="Down T."/>
            <person name="Engstrom P."/>
            <person name="Fagiolini M."/>
            <person name="Faulkner G."/>
            <person name="Fletcher C.F."/>
            <person name="Fukushima T."/>
            <person name="Furuno M."/>
            <person name="Futaki S."/>
            <person name="Gariboldi M."/>
            <person name="Georgii-Hemming P."/>
            <person name="Gingeras T.R."/>
            <person name="Gojobori T."/>
            <person name="Green R.E."/>
            <person name="Gustincich S."/>
            <person name="Harbers M."/>
            <person name="Hayashi Y."/>
            <person name="Hensch T.K."/>
            <person name="Hirokawa N."/>
            <person name="Hill D."/>
            <person name="Huminiecki L."/>
            <person name="Iacono M."/>
            <person name="Ikeo K."/>
            <person name="Iwama A."/>
            <person name="Ishikawa T."/>
            <person name="Jakt M."/>
            <person name="Kanapin A."/>
            <person name="Katoh M."/>
            <person name="Kawasawa Y."/>
            <person name="Kelso J."/>
            <person name="Kitamura H."/>
            <person name="Kitano H."/>
            <person name="Kollias G."/>
            <person name="Krishnan S.P."/>
            <person name="Kruger A."/>
            <person name="Kummerfeld S.K."/>
            <person name="Kurochkin I.V."/>
            <person name="Lareau L.F."/>
            <person name="Lazarevic D."/>
            <person name="Lipovich L."/>
            <person name="Liu J."/>
            <person name="Liuni S."/>
            <person name="McWilliam S."/>
            <person name="Madan Babu M."/>
            <person name="Madera M."/>
            <person name="Marchionni L."/>
            <person name="Matsuda H."/>
            <person name="Matsuzawa S."/>
            <person name="Miki H."/>
            <person name="Mignone F."/>
            <person name="Miyake S."/>
            <person name="Morris K."/>
            <person name="Mottagui-Tabar S."/>
            <person name="Mulder N."/>
            <person name="Nakano N."/>
            <person name="Nakauchi H."/>
            <person name="Ng P."/>
            <person name="Nilsson R."/>
            <person name="Nishiguchi S."/>
            <person name="Nishikawa S."/>
            <person name="Nori F."/>
            <person name="Ohara O."/>
            <person name="Okazaki Y."/>
            <person name="Orlando V."/>
            <person name="Pang K.C."/>
            <person name="Pavan W.J."/>
            <person name="Pavesi G."/>
            <person name="Pesole G."/>
            <person name="Petrovsky N."/>
            <person name="Piazza S."/>
            <person name="Reed J."/>
            <person name="Reid J.F."/>
            <person name="Ring B.Z."/>
            <person name="Ringwald M."/>
            <person name="Rost B."/>
            <person name="Ruan Y."/>
            <person name="Salzberg S.L."/>
            <person name="Sandelin A."/>
            <person name="Schneider C."/>
            <person name="Schoenbach C."/>
            <person name="Sekiguchi K."/>
            <person name="Semple C.A."/>
            <person name="Seno S."/>
            <person name="Sessa L."/>
            <person name="Sheng Y."/>
            <person name="Shibata Y."/>
            <person name="Shimada H."/>
            <person name="Shimada K."/>
            <person name="Silva D."/>
            <person name="Sinclair B."/>
            <person name="Sperling S."/>
            <person name="Stupka E."/>
            <person name="Sugiura K."/>
            <person name="Sultana R."/>
            <person name="Takenaka Y."/>
            <person name="Taki K."/>
            <person name="Tammoja K."/>
            <person name="Tan S.L."/>
            <person name="Tang S."/>
            <person name="Taylor M.S."/>
            <person name="Tegner J."/>
            <person name="Teichmann S.A."/>
            <person name="Ueda H.R."/>
            <person name="van Nimwegen E."/>
            <person name="Verardo R."/>
            <person name="Wei C.L."/>
            <person name="Yagi K."/>
            <person name="Yamanishi H."/>
            <person name="Zabarovsky E."/>
            <person name="Zhu S."/>
            <person name="Zimmer A."/>
            <person name="Hide W."/>
            <person name="Bult C."/>
            <person name="Grimmond S.M."/>
            <person name="Teasdale R.D."/>
            <person name="Liu E.T."/>
            <person name="Brusic V."/>
            <person name="Quackenbush J."/>
            <person name="Wahlestedt C."/>
            <person name="Mattick J.S."/>
            <person name="Hume D.A."/>
            <person name="Kai C."/>
            <person name="Sasaki D."/>
            <person name="Tomaru Y."/>
            <person name="Fukuda S."/>
            <person name="Kanamori-Katayama M."/>
            <person name="Suzuki M."/>
            <person name="Aoki J."/>
            <person name="Arakawa T."/>
            <person name="Iida J."/>
            <person name="Imamura K."/>
            <person name="Itoh M."/>
            <person name="Kato T."/>
            <person name="Kawaji H."/>
            <person name="Kawagashira N."/>
            <person name="Kawashima T."/>
            <person name="Kojima M."/>
            <person name="Kondo S."/>
            <person name="Konno H."/>
            <person name="Nakano K."/>
            <person name="Ninomiya N."/>
            <person name="Nishio T."/>
            <person name="Okada M."/>
            <person name="Plessy C."/>
            <person name="Shibata K."/>
            <person name="Shiraki T."/>
            <person name="Suzuki S."/>
            <person name="Tagami M."/>
            <person name="Waki K."/>
            <person name="Watahiki A."/>
            <person name="Okamura-Oho Y."/>
            <person name="Suzuki H."/>
            <person name="Kawai J."/>
            <person name="Hayashizaki Y."/>
        </authorList>
    </citation>
    <scope>NUCLEOTIDE SEQUENCE [LARGE SCALE MRNA] (ISOFORM 1)</scope>
    <source>
        <strain>C57BL/6J</strain>
        <tissue>Liver</tissue>
        <tissue>Sympathetic ganglion</tissue>
    </source>
</reference>
<reference evidence="6" key="3">
    <citation type="journal article" date="2004" name="Genome Res.">
        <title>The status, quality, and expansion of the NIH full-length cDNA project: the Mammalian Gene Collection (MGC).</title>
        <authorList>
            <consortium name="The MGC Project Team"/>
        </authorList>
    </citation>
    <scope>NUCLEOTIDE SEQUENCE [LARGE SCALE MRNA] (ISOFORM 1)</scope>
    <source>
        <tissue evidence="4">Mammary gland</tissue>
    </source>
</reference>
<reference key="4">
    <citation type="journal article" date="2010" name="Cell">
        <title>A tissue-specific atlas of mouse protein phosphorylation and expression.</title>
        <authorList>
            <person name="Huttlin E.L."/>
            <person name="Jedrychowski M.P."/>
            <person name="Elias J.E."/>
            <person name="Goswami T."/>
            <person name="Rad R."/>
            <person name="Beausoleil S.A."/>
            <person name="Villen J."/>
            <person name="Haas W."/>
            <person name="Sowa M.E."/>
            <person name="Gygi S.P."/>
        </authorList>
    </citation>
    <scope>PHOSPHORYLATION [LARGE SCALE ANALYSIS] AT SER-166</scope>
    <scope>IDENTIFICATION BY MASS SPECTROMETRY [LARGE SCALE ANALYSIS]</scope>
    <source>
        <tissue>Heart</tissue>
        <tissue>Testis</tissue>
    </source>
</reference>
<gene>
    <name type="primary">Yaf2</name>
</gene>
<comment type="function">
    <text>Binds to MYC and inhibits MYC-mediated transactivation. Also binds to MYCN and enhances MYCN-dependent transcriptional activation. Increases calpain 2-mediated proteolysis of YY1 in vitro. Component of the E2F6.com-1 complex, a repressive complex that methylates 'Lys-9' of histone H3, suggesting that it is involved in chromatin-remodeling.</text>
</comment>
<comment type="subunit">
    <text evidence="3">Interacts with MYC, MYCN, RNF2/RING1B and YY1. Part of the E2F6.com-1 complex in G0 phase composed of E2F6, MGA, MAX, TFDP1, CBX3, BAT8, EUHMTASE1, RING1, RNF2, MBLR, L3MBTL2 and YAF2.</text>
</comment>
<comment type="subcellular location">
    <subcellularLocation>
        <location evidence="3">Nucleus</location>
    </subcellularLocation>
</comment>
<comment type="alternative products">
    <event type="alternative splicing"/>
    <isoform>
        <id>Q99LW6-1</id>
        <name evidence="3">1</name>
        <name evidence="3">YAF2-a</name>
        <sequence type="displayed"/>
    </isoform>
    <isoform>
        <id>Q99LW6-2</id>
        <name evidence="3">2</name>
        <name evidence="3">YAF2-b</name>
        <sequence type="described" ref="VSP_050619 VSP_050620"/>
    </isoform>
</comment>
<comment type="tissue specificity">
    <text evidence="3">In the mesoderm, expressed in the region close to the surface ectoderm.</text>
</comment>
<comment type="developmental stage">
    <text evidence="3">Expressed in both pre- and post-implantation embryos.</text>
</comment>
<feature type="chain" id="PRO_0000066114" description="YY1-associated factor 2">
    <location>
        <begin position="1"/>
        <end position="179"/>
    </location>
</feature>
<feature type="zinc finger region" description="RanBP2-type" evidence="1">
    <location>
        <begin position="19"/>
        <end position="48"/>
    </location>
</feature>
<feature type="region of interest" description="Disordered" evidence="2">
    <location>
        <begin position="1"/>
        <end position="23"/>
    </location>
</feature>
<feature type="region of interest" description="Disordered" evidence="2">
    <location>
        <begin position="47"/>
        <end position="117"/>
    </location>
</feature>
<feature type="region of interest" description="Disordered" evidence="2">
    <location>
        <begin position="133"/>
        <end position="179"/>
    </location>
</feature>
<feature type="compositionally biased region" description="Low complexity" evidence="2">
    <location>
        <begin position="62"/>
        <end position="73"/>
    </location>
</feature>
<feature type="compositionally biased region" description="Basic and acidic residues" evidence="2">
    <location>
        <begin position="74"/>
        <end position="93"/>
    </location>
</feature>
<feature type="compositionally biased region" description="Basic residues" evidence="2">
    <location>
        <begin position="95"/>
        <end position="105"/>
    </location>
</feature>
<feature type="compositionally biased region" description="Polar residues" evidence="2">
    <location>
        <begin position="146"/>
        <end position="155"/>
    </location>
</feature>
<feature type="compositionally biased region" description="Low complexity" evidence="2">
    <location>
        <begin position="162"/>
        <end position="173"/>
    </location>
</feature>
<feature type="modified residue" description="Phosphoserine" evidence="9">
    <location>
        <position position="166"/>
    </location>
</feature>
<feature type="splice variant" id="VSP_050619" description="In isoform 2." evidence="5">
    <original>KPRPVSQLVAQQVTQQF</original>
    <variation>STFSEAIANALRTKGPL</variation>
    <location>
        <begin position="52"/>
        <end position="68"/>
    </location>
</feature>
<feature type="splice variant" id="VSP_050620" description="In isoform 2." evidence="5">
    <location>
        <begin position="69"/>
        <end position="179"/>
    </location>
</feature>
<feature type="sequence conflict" description="In Ref. 2; BAB23741." evidence="6" ref="2">
    <original>H</original>
    <variation>S</variation>
    <location>
        <position position="98"/>
    </location>
</feature>
<feature type="sequence conflict" description="In Ref. 2; BAB23741." evidence="6" ref="2">
    <original>N</original>
    <variation>Y</variation>
    <location>
        <position position="107"/>
    </location>
</feature>
<feature type="sequence conflict" description="In Ref. 2; BAB23741." evidence="6" ref="2">
    <original>S</original>
    <variation>F</variation>
    <location>
        <position position="162"/>
    </location>
</feature>
<name>YAF2_MOUSE</name>